<evidence type="ECO:0000255" key="1">
    <source>
        <dbReference type="HAMAP-Rule" id="MF_01595"/>
    </source>
</evidence>
<evidence type="ECO:0000256" key="2">
    <source>
        <dbReference type="SAM" id="MobiDB-lite"/>
    </source>
</evidence>
<sequence>MTKQVFKTVFAGRELVVETGQVAKQANGSAVVRYGESTVLTAATMSKKMATGDFFPLQVNYEEKMYAAGKYPGGFNKREGRPSTDATLTARLIDRPIRPMFAEGFRNEVQVINTVLSYDEDASPQMAAMFGSSLALSISDIPFNGPIAGVQVGYVDGEFIINPSKEQKEVSLLELTVAGTKDAINMVESGAKELSEDVMLEALLKGHQAVKELIAFQEEIVAAVGKEKAEVELLHVDEELQAEIVAAYNSDLQKAVQVEEKLAREAATQAVKDQVTAVYEEKYADHEEFDRIMRDVAEILEQMEHAEVRRLITEDKVRPDGRKVDEIRPLDAEVDYLPRVHGSGLFTRGQTQALSVLTLAPMGETQIVDGLDPEYKKRFMHHYNFPQYSVGETGRYGAPGRREIGHGALGERALEQVLPSLEEFPYAIRLVAEVLESNGSSSQASICAGTLALMAGGVPIKAPVAGIAMGLISDGNNYTVLTDIQGLEDHFGDMDFKVAGTREGITALQMDIKIEGITAEILTEALDQAKKARFEILDLIEATIPAPRPELAPTAPKIDTIKIDVDKIKIVIGKGGETIDKIIAETGVKIDIDEEGNVSIYSSDQDAINRAKEIIAGLVREAKVDEVYHAKVVRIEKFGAFVNLFDKTDALVHISELAWTRTNNVEDVVQIGDEVDVMVIKIDAKGRVDASMKALLPRPPKPEKSDKHHDKGHPHKKHEEAPLTQTEE</sequence>
<comment type="function">
    <text evidence="1">Involved in mRNA degradation. Catalyzes the phosphorolysis of single-stranded polyribonucleotides processively in the 3'- to 5'-direction.</text>
</comment>
<comment type="catalytic activity">
    <reaction evidence="1">
        <text>RNA(n+1) + phosphate = RNA(n) + a ribonucleoside 5'-diphosphate</text>
        <dbReference type="Rhea" id="RHEA:22096"/>
        <dbReference type="Rhea" id="RHEA-COMP:14527"/>
        <dbReference type="Rhea" id="RHEA-COMP:17342"/>
        <dbReference type="ChEBI" id="CHEBI:43474"/>
        <dbReference type="ChEBI" id="CHEBI:57930"/>
        <dbReference type="ChEBI" id="CHEBI:140395"/>
        <dbReference type="EC" id="2.7.7.8"/>
    </reaction>
</comment>
<comment type="cofactor">
    <cofactor evidence="1">
        <name>Mg(2+)</name>
        <dbReference type="ChEBI" id="CHEBI:18420"/>
    </cofactor>
</comment>
<comment type="subcellular location">
    <subcellularLocation>
        <location evidence="1">Cytoplasm</location>
    </subcellularLocation>
</comment>
<comment type="similarity">
    <text evidence="1">Belongs to the polyribonucleotide nucleotidyltransferase family.</text>
</comment>
<accession>A8AV53</accession>
<gene>
    <name evidence="1" type="primary">pnp</name>
    <name type="ordered locus">SGO_0344</name>
</gene>
<feature type="chain" id="PRO_0000329867" description="Polyribonucleotide nucleotidyltransferase">
    <location>
        <begin position="1"/>
        <end position="728"/>
    </location>
</feature>
<feature type="domain" description="KH" evidence="1">
    <location>
        <begin position="556"/>
        <end position="615"/>
    </location>
</feature>
<feature type="domain" description="S1 motif" evidence="1">
    <location>
        <begin position="625"/>
        <end position="693"/>
    </location>
</feature>
<feature type="region of interest" description="Disordered" evidence="2">
    <location>
        <begin position="691"/>
        <end position="728"/>
    </location>
</feature>
<feature type="compositionally biased region" description="Basic and acidic residues" evidence="2">
    <location>
        <begin position="700"/>
        <end position="709"/>
    </location>
</feature>
<feature type="binding site" evidence="1">
    <location>
        <position position="489"/>
    </location>
    <ligand>
        <name>Mg(2+)</name>
        <dbReference type="ChEBI" id="CHEBI:18420"/>
    </ligand>
</feature>
<feature type="binding site" evidence="1">
    <location>
        <position position="495"/>
    </location>
    <ligand>
        <name>Mg(2+)</name>
        <dbReference type="ChEBI" id="CHEBI:18420"/>
    </ligand>
</feature>
<protein>
    <recommendedName>
        <fullName evidence="1">Polyribonucleotide nucleotidyltransferase</fullName>
        <ecNumber evidence="1">2.7.7.8</ecNumber>
    </recommendedName>
    <alternativeName>
        <fullName evidence="1">Polynucleotide phosphorylase</fullName>
        <shortName evidence="1">PNPase</shortName>
    </alternativeName>
</protein>
<organism>
    <name type="scientific">Streptococcus gordonii (strain Challis / ATCC 35105 / BCRC 15272 / CH1 / DL1 / V288)</name>
    <dbReference type="NCBI Taxonomy" id="467705"/>
    <lineage>
        <taxon>Bacteria</taxon>
        <taxon>Bacillati</taxon>
        <taxon>Bacillota</taxon>
        <taxon>Bacilli</taxon>
        <taxon>Lactobacillales</taxon>
        <taxon>Streptococcaceae</taxon>
        <taxon>Streptococcus</taxon>
    </lineage>
</organism>
<reference key="1">
    <citation type="journal article" date="2007" name="J. Bacteriol.">
        <title>Genome-wide transcriptional changes in Streptococcus gordonii in response to competence signaling peptide.</title>
        <authorList>
            <person name="Vickerman M.M."/>
            <person name="Iobst S."/>
            <person name="Jesionowski A.M."/>
            <person name="Gill S.R."/>
        </authorList>
    </citation>
    <scope>NUCLEOTIDE SEQUENCE [LARGE SCALE GENOMIC DNA]</scope>
    <source>
        <strain>Challis / ATCC 35105 / BCRC 15272 / CH1 / DL1 / V288</strain>
    </source>
</reference>
<name>PNP_STRGC</name>
<proteinExistence type="inferred from homology"/>
<keyword id="KW-0963">Cytoplasm</keyword>
<keyword id="KW-0460">Magnesium</keyword>
<keyword id="KW-0479">Metal-binding</keyword>
<keyword id="KW-0548">Nucleotidyltransferase</keyword>
<keyword id="KW-1185">Reference proteome</keyword>
<keyword id="KW-0694">RNA-binding</keyword>
<keyword id="KW-0808">Transferase</keyword>
<dbReference type="EC" id="2.7.7.8" evidence="1"/>
<dbReference type="EMBL" id="CP000725">
    <property type="protein sequence ID" value="ABV10418.1"/>
    <property type="molecule type" value="Genomic_DNA"/>
</dbReference>
<dbReference type="RefSeq" id="WP_011999868.1">
    <property type="nucleotide sequence ID" value="NC_009785.1"/>
</dbReference>
<dbReference type="SMR" id="A8AV53"/>
<dbReference type="STRING" id="467705.SGO_0344"/>
<dbReference type="KEGG" id="sgo:SGO_0344"/>
<dbReference type="eggNOG" id="COG1185">
    <property type="taxonomic scope" value="Bacteria"/>
</dbReference>
<dbReference type="HOGENOM" id="CLU_004217_2_2_9"/>
<dbReference type="Proteomes" id="UP000001131">
    <property type="component" value="Chromosome"/>
</dbReference>
<dbReference type="GO" id="GO:0005829">
    <property type="term" value="C:cytosol"/>
    <property type="evidence" value="ECO:0007669"/>
    <property type="project" value="TreeGrafter"/>
</dbReference>
<dbReference type="GO" id="GO:0000175">
    <property type="term" value="F:3'-5'-RNA exonuclease activity"/>
    <property type="evidence" value="ECO:0007669"/>
    <property type="project" value="TreeGrafter"/>
</dbReference>
<dbReference type="GO" id="GO:0000287">
    <property type="term" value="F:magnesium ion binding"/>
    <property type="evidence" value="ECO:0007669"/>
    <property type="project" value="UniProtKB-UniRule"/>
</dbReference>
<dbReference type="GO" id="GO:0004654">
    <property type="term" value="F:polyribonucleotide nucleotidyltransferase activity"/>
    <property type="evidence" value="ECO:0007669"/>
    <property type="project" value="UniProtKB-UniRule"/>
</dbReference>
<dbReference type="GO" id="GO:0003723">
    <property type="term" value="F:RNA binding"/>
    <property type="evidence" value="ECO:0007669"/>
    <property type="project" value="UniProtKB-UniRule"/>
</dbReference>
<dbReference type="GO" id="GO:0006402">
    <property type="term" value="P:mRNA catabolic process"/>
    <property type="evidence" value="ECO:0007669"/>
    <property type="project" value="UniProtKB-UniRule"/>
</dbReference>
<dbReference type="GO" id="GO:0006396">
    <property type="term" value="P:RNA processing"/>
    <property type="evidence" value="ECO:0007669"/>
    <property type="project" value="InterPro"/>
</dbReference>
<dbReference type="CDD" id="cd02393">
    <property type="entry name" value="KH-I_PNPase"/>
    <property type="match status" value="1"/>
</dbReference>
<dbReference type="CDD" id="cd11363">
    <property type="entry name" value="RNase_PH_PNPase_1"/>
    <property type="match status" value="1"/>
</dbReference>
<dbReference type="CDD" id="cd11364">
    <property type="entry name" value="RNase_PH_PNPase_2"/>
    <property type="match status" value="1"/>
</dbReference>
<dbReference type="FunFam" id="2.40.50.140:FF:000023">
    <property type="entry name" value="Polyribonucleotide nucleotidyltransferase"/>
    <property type="match status" value="1"/>
</dbReference>
<dbReference type="FunFam" id="3.30.1370.10:FF:000001">
    <property type="entry name" value="Polyribonucleotide nucleotidyltransferase"/>
    <property type="match status" value="1"/>
</dbReference>
<dbReference type="FunFam" id="3.30.230.70:FF:000001">
    <property type="entry name" value="Polyribonucleotide nucleotidyltransferase"/>
    <property type="match status" value="1"/>
</dbReference>
<dbReference type="FunFam" id="3.30.230.70:FF:000002">
    <property type="entry name" value="Polyribonucleotide nucleotidyltransferase"/>
    <property type="match status" value="1"/>
</dbReference>
<dbReference type="Gene3D" id="3.30.230.70">
    <property type="entry name" value="GHMP Kinase, N-terminal domain"/>
    <property type="match status" value="2"/>
</dbReference>
<dbReference type="Gene3D" id="3.30.1370.10">
    <property type="entry name" value="K Homology domain, type 1"/>
    <property type="match status" value="1"/>
</dbReference>
<dbReference type="Gene3D" id="2.40.50.140">
    <property type="entry name" value="Nucleic acid-binding proteins"/>
    <property type="match status" value="1"/>
</dbReference>
<dbReference type="HAMAP" id="MF_01595">
    <property type="entry name" value="PNPase"/>
    <property type="match status" value="1"/>
</dbReference>
<dbReference type="InterPro" id="IPR001247">
    <property type="entry name" value="ExoRNase_PH_dom1"/>
</dbReference>
<dbReference type="InterPro" id="IPR015847">
    <property type="entry name" value="ExoRNase_PH_dom2"/>
</dbReference>
<dbReference type="InterPro" id="IPR036345">
    <property type="entry name" value="ExoRNase_PH_dom2_sf"/>
</dbReference>
<dbReference type="InterPro" id="IPR004087">
    <property type="entry name" value="KH_dom"/>
</dbReference>
<dbReference type="InterPro" id="IPR004088">
    <property type="entry name" value="KH_dom_type_1"/>
</dbReference>
<dbReference type="InterPro" id="IPR036612">
    <property type="entry name" value="KH_dom_type_1_sf"/>
</dbReference>
<dbReference type="InterPro" id="IPR012340">
    <property type="entry name" value="NA-bd_OB-fold"/>
</dbReference>
<dbReference type="InterPro" id="IPR012162">
    <property type="entry name" value="PNPase"/>
</dbReference>
<dbReference type="InterPro" id="IPR027408">
    <property type="entry name" value="PNPase/RNase_PH_dom_sf"/>
</dbReference>
<dbReference type="InterPro" id="IPR015848">
    <property type="entry name" value="PNPase_PH_RNA-bd_bac/org-type"/>
</dbReference>
<dbReference type="InterPro" id="IPR036456">
    <property type="entry name" value="PNPase_PH_RNA-bd_sf"/>
</dbReference>
<dbReference type="InterPro" id="IPR020568">
    <property type="entry name" value="Ribosomal_Su5_D2-typ_SF"/>
</dbReference>
<dbReference type="InterPro" id="IPR003029">
    <property type="entry name" value="S1_domain"/>
</dbReference>
<dbReference type="NCBIfam" id="TIGR03591">
    <property type="entry name" value="polynuc_phos"/>
    <property type="match status" value="1"/>
</dbReference>
<dbReference type="NCBIfam" id="NF008805">
    <property type="entry name" value="PRK11824.1"/>
    <property type="match status" value="1"/>
</dbReference>
<dbReference type="PANTHER" id="PTHR11252">
    <property type="entry name" value="POLYRIBONUCLEOTIDE NUCLEOTIDYLTRANSFERASE"/>
    <property type="match status" value="1"/>
</dbReference>
<dbReference type="PANTHER" id="PTHR11252:SF0">
    <property type="entry name" value="POLYRIBONUCLEOTIDE NUCLEOTIDYLTRANSFERASE 1, MITOCHONDRIAL"/>
    <property type="match status" value="1"/>
</dbReference>
<dbReference type="Pfam" id="PF00013">
    <property type="entry name" value="KH_1"/>
    <property type="match status" value="1"/>
</dbReference>
<dbReference type="Pfam" id="PF03726">
    <property type="entry name" value="PNPase"/>
    <property type="match status" value="1"/>
</dbReference>
<dbReference type="Pfam" id="PF01138">
    <property type="entry name" value="RNase_PH"/>
    <property type="match status" value="2"/>
</dbReference>
<dbReference type="Pfam" id="PF03725">
    <property type="entry name" value="RNase_PH_C"/>
    <property type="match status" value="2"/>
</dbReference>
<dbReference type="Pfam" id="PF00575">
    <property type="entry name" value="S1"/>
    <property type="match status" value="1"/>
</dbReference>
<dbReference type="PIRSF" id="PIRSF005499">
    <property type="entry name" value="PNPase"/>
    <property type="match status" value="1"/>
</dbReference>
<dbReference type="SMART" id="SM00322">
    <property type="entry name" value="KH"/>
    <property type="match status" value="1"/>
</dbReference>
<dbReference type="SMART" id="SM00316">
    <property type="entry name" value="S1"/>
    <property type="match status" value="1"/>
</dbReference>
<dbReference type="SUPFAM" id="SSF54791">
    <property type="entry name" value="Eukaryotic type KH-domain (KH-domain type I)"/>
    <property type="match status" value="1"/>
</dbReference>
<dbReference type="SUPFAM" id="SSF50249">
    <property type="entry name" value="Nucleic acid-binding proteins"/>
    <property type="match status" value="1"/>
</dbReference>
<dbReference type="SUPFAM" id="SSF46915">
    <property type="entry name" value="Polynucleotide phosphorylase/guanosine pentaphosphate synthase (PNPase/GPSI), domain 3"/>
    <property type="match status" value="1"/>
</dbReference>
<dbReference type="SUPFAM" id="SSF55666">
    <property type="entry name" value="Ribonuclease PH domain 2-like"/>
    <property type="match status" value="2"/>
</dbReference>
<dbReference type="SUPFAM" id="SSF54211">
    <property type="entry name" value="Ribosomal protein S5 domain 2-like"/>
    <property type="match status" value="2"/>
</dbReference>
<dbReference type="PROSITE" id="PS50084">
    <property type="entry name" value="KH_TYPE_1"/>
    <property type="match status" value="1"/>
</dbReference>
<dbReference type="PROSITE" id="PS50126">
    <property type="entry name" value="S1"/>
    <property type="match status" value="1"/>
</dbReference>